<name>SCR8B_ORBFA</name>
<protein>
    <recommendedName>
        <fullName evidence="4">Small cysteine-rich protein 8</fullName>
        <shortName evidence="4">Mfav-SCRiP8</shortName>
        <shortName evidence="4">SCRiP8</shortName>
    </recommendedName>
</protein>
<evidence type="ECO:0000250" key="1">
    <source>
        <dbReference type="UniProtKB" id="C0H691"/>
    </source>
</evidence>
<evidence type="ECO:0000250" key="2">
    <source>
        <dbReference type="UniProtKB" id="C0H692"/>
    </source>
</evidence>
<evidence type="ECO:0000255" key="3"/>
<evidence type="ECO:0000303" key="4">
    <source>
    </source>
</evidence>
<evidence type="ECO:0000305" key="5"/>
<evidence type="ECO:0000305" key="6">
    <source>
    </source>
</evidence>
<evidence type="ECO:0000305" key="7">
    <source>
    </source>
</evidence>
<proteinExistence type="inferred from homology"/>
<comment type="function">
    <text evidence="1 2 6">Induces neurotoxic symptoms on zebrafish (By similarity). Has also been claimed to be implied in calcification, but tests on homolog proteins suggest that proteins of this family have a neurotoxic function and not a calcification function (PubMed:19283069).</text>
</comment>
<comment type="subcellular location">
    <subcellularLocation>
        <location>Secreted</location>
    </subcellularLocation>
    <subcellularLocation>
        <location evidence="5">Nematocyst</location>
    </subcellularLocation>
</comment>
<comment type="PTM">
    <text evidence="5">Contains 4 disulfide bonds.</text>
</comment>
<comment type="similarity">
    <text evidence="7">Belongs to the Cnidaria small cysteine-rich protein (SCRiP) family. beta subfamily.</text>
</comment>
<keyword id="KW-0165">Cleavage on pair of basic residues</keyword>
<keyword id="KW-1015">Disulfide bond</keyword>
<keyword id="KW-0166">Nematocyst</keyword>
<keyword id="KW-0528">Neurotoxin</keyword>
<keyword id="KW-0964">Secreted</keyword>
<keyword id="KW-0732">Signal</keyword>
<keyword id="KW-0800">Toxin</keyword>
<accession>B2ZG38</accession>
<feature type="signal peptide" evidence="3">
    <location>
        <begin position="1"/>
        <end position="21"/>
    </location>
</feature>
<feature type="propeptide" id="PRO_0000434289" evidence="5">
    <location>
        <begin position="22"/>
        <end position="31"/>
    </location>
</feature>
<feature type="chain" id="PRO_0000434290" description="Small cysteine-rich protein 8">
    <location>
        <begin position="34"/>
        <end position="74"/>
    </location>
</feature>
<organism>
    <name type="scientific">Orbicella faveolata</name>
    <name type="common">Mountainous star coral</name>
    <name type="synonym">Montastraea faveolata</name>
    <dbReference type="NCBI Taxonomy" id="48498"/>
    <lineage>
        <taxon>Eukaryota</taxon>
        <taxon>Metazoa</taxon>
        <taxon>Cnidaria</taxon>
        <taxon>Anthozoa</taxon>
        <taxon>Hexacorallia</taxon>
        <taxon>Scleractinia</taxon>
        <taxon>Faviina</taxon>
        <taxon>Merulinidae</taxon>
        <taxon>Orbicella</taxon>
    </lineage>
</organism>
<sequence length="74" mass="8107">MAAKFHLCLLLIILGTITVQGARHPGKPHFFRRQPGSDCASINGRCVPPNERCPNGECHLQSCPGYQEKCCCPV</sequence>
<dbReference type="EMBL" id="EU659816">
    <property type="protein sequence ID" value="ACC86273.1"/>
    <property type="molecule type" value="mRNA"/>
</dbReference>
<dbReference type="SMR" id="B2ZG38"/>
<dbReference type="GO" id="GO:0005576">
    <property type="term" value="C:extracellular region"/>
    <property type="evidence" value="ECO:0007669"/>
    <property type="project" value="UniProtKB-SubCell"/>
</dbReference>
<dbReference type="GO" id="GO:0042151">
    <property type="term" value="C:nematocyst"/>
    <property type="evidence" value="ECO:0007669"/>
    <property type="project" value="UniProtKB-SubCell"/>
</dbReference>
<dbReference type="GO" id="GO:0090729">
    <property type="term" value="F:toxin activity"/>
    <property type="evidence" value="ECO:0007669"/>
    <property type="project" value="UniProtKB-KW"/>
</dbReference>
<reference key="1">
    <citation type="journal article" date="2009" name="PLoS ONE">
        <title>Identification and gene expression analysis of a taxonomically restricted cysteine-rich protein family in reef-building corals.</title>
        <authorList>
            <person name="Sunagawa S."/>
            <person name="DeSalvo M.K."/>
            <person name="Voolstra C.R."/>
            <person name="Reyes-Bermudez A."/>
            <person name="Medina M."/>
        </authorList>
    </citation>
    <scope>NUCLEOTIDE SEQUENCE [MRNA]</scope>
</reference>
<reference key="2">
    <citation type="journal article" date="2024" name="Toxins">
        <title>Evolutionary analysis of cnidaria small cysteine-rich proteins (scrips), an enigmatic neurotoxin family from stony corals and sea anemones (Anthozoa: Hexacorallia).</title>
        <authorList>
            <person name="Barroso R.A."/>
            <person name="Ramos L."/>
            <person name="Moreno H."/>
            <person name="Antunes A."/>
        </authorList>
    </citation>
    <scope>NOMENCLATURE</scope>
</reference>